<feature type="signal peptide" evidence="1">
    <location>
        <begin position="1"/>
        <end position="27"/>
    </location>
</feature>
<feature type="chain" id="PRO_0000008727" description="Extensin-3">
    <location>
        <begin position="28"/>
        <end position="431"/>
    </location>
</feature>
<feature type="repeat" description="1-1">
    <location>
        <begin position="33"/>
        <end position="41"/>
    </location>
</feature>
<feature type="repeat" description="2-1">
    <location>
        <begin position="49"/>
        <end position="55"/>
    </location>
</feature>
<feature type="repeat" description="3-1">
    <location>
        <begin position="56"/>
        <end position="63"/>
    </location>
</feature>
<feature type="repeat" description="1-2">
    <location>
        <begin position="68"/>
        <end position="76"/>
    </location>
</feature>
<feature type="repeat" description="2-2">
    <location>
        <begin position="77"/>
        <end position="83"/>
    </location>
</feature>
<feature type="repeat" description="3-2">
    <location>
        <begin position="84"/>
        <end position="91"/>
    </location>
</feature>
<feature type="repeat" description="1-3">
    <location>
        <begin position="96"/>
        <end position="104"/>
    </location>
</feature>
<feature type="repeat" description="2-3">
    <location>
        <begin position="105"/>
        <end position="111"/>
    </location>
</feature>
<feature type="repeat" description="3-3">
    <location>
        <begin position="112"/>
        <end position="119"/>
    </location>
</feature>
<feature type="repeat" description="1-4">
    <location>
        <begin position="124"/>
        <end position="132"/>
    </location>
</feature>
<feature type="repeat" description="2-4">
    <location>
        <begin position="133"/>
        <end position="139"/>
    </location>
</feature>
<feature type="repeat" description="3-4">
    <location>
        <begin position="140"/>
        <end position="147"/>
    </location>
</feature>
<feature type="repeat" description="1-5">
    <location>
        <begin position="152"/>
        <end position="160"/>
    </location>
</feature>
<feature type="repeat" description="2-5">
    <location>
        <begin position="161"/>
        <end position="167"/>
    </location>
</feature>
<feature type="repeat" description="3-5">
    <location>
        <begin position="168"/>
        <end position="175"/>
    </location>
</feature>
<feature type="repeat" description="1-6">
    <location>
        <begin position="180"/>
        <end position="188"/>
    </location>
</feature>
<feature type="repeat" description="2-6">
    <location>
        <begin position="189"/>
        <end position="195"/>
    </location>
</feature>
<feature type="repeat" description="3-6">
    <location>
        <begin position="196"/>
        <end position="203"/>
    </location>
</feature>
<feature type="repeat" description="1-7">
    <location>
        <begin position="208"/>
        <end position="216"/>
    </location>
</feature>
<feature type="repeat" description="2-7">
    <location>
        <begin position="217"/>
        <end position="223"/>
    </location>
</feature>
<feature type="repeat" description="3-7">
    <location>
        <begin position="224"/>
        <end position="231"/>
    </location>
</feature>
<feature type="repeat" description="1-8">
    <location>
        <begin position="236"/>
        <end position="244"/>
    </location>
</feature>
<feature type="repeat" description="2-8">
    <location>
        <begin position="245"/>
        <end position="251"/>
    </location>
</feature>
<feature type="repeat" description="3-8">
    <location>
        <begin position="252"/>
        <end position="259"/>
    </location>
</feature>
<feature type="repeat" description="1-9">
    <location>
        <begin position="264"/>
        <end position="272"/>
    </location>
</feature>
<feature type="repeat" description="2-9">
    <location>
        <begin position="273"/>
        <end position="279"/>
    </location>
</feature>
<feature type="repeat" description="3-9">
    <location>
        <begin position="280"/>
        <end position="287"/>
    </location>
</feature>
<feature type="repeat" description="1-10">
    <location>
        <begin position="292"/>
        <end position="300"/>
    </location>
</feature>
<feature type="repeat" description="2-10">
    <location>
        <begin position="301"/>
        <end position="307"/>
    </location>
</feature>
<feature type="repeat" description="3-10">
    <location>
        <begin position="308"/>
        <end position="315"/>
    </location>
</feature>
<feature type="repeat" description="1-11">
    <location>
        <begin position="320"/>
        <end position="328"/>
    </location>
</feature>
<feature type="repeat" description="2-11">
    <location>
        <begin position="329"/>
        <end position="335"/>
    </location>
</feature>
<feature type="repeat" description="3-11">
    <location>
        <begin position="336"/>
        <end position="343"/>
    </location>
</feature>
<feature type="repeat" description="1-12">
    <location>
        <begin position="348"/>
        <end position="356"/>
    </location>
</feature>
<feature type="repeat" description="2-12">
    <location>
        <begin position="357"/>
        <end position="363"/>
    </location>
</feature>
<feature type="repeat" description="3-12">
    <location>
        <begin position="364"/>
        <end position="371"/>
    </location>
</feature>
<feature type="repeat" description="1-13">
    <location>
        <begin position="376"/>
        <end position="384"/>
    </location>
</feature>
<feature type="repeat" description="2-13">
    <location>
        <begin position="385"/>
        <end position="391"/>
    </location>
</feature>
<feature type="region of interest" description="13 X 9 AA repeats of S-P-P-P-P-V-K-H-Y">
    <location>
        <begin position="33"/>
        <end position="384"/>
    </location>
</feature>
<feature type="region of interest" description="Disordered" evidence="2">
    <location>
        <begin position="42"/>
        <end position="408"/>
    </location>
</feature>
<feature type="region of interest" description="13 X 7 AA repeats of S-P-P-P-V-Y-H">
    <location>
        <begin position="49"/>
        <end position="391"/>
    </location>
</feature>
<feature type="region of interest" description="12 X 8 AA repeats of S-P-P-P-P-K-K-H">
    <location>
        <begin position="56"/>
        <end position="371"/>
    </location>
</feature>
<feature type="region of interest" description="Isodityrosine cross-linking" evidence="1">
    <location>
        <begin position="64"/>
        <end position="67"/>
    </location>
</feature>
<feature type="region of interest" description="Isodityrosine cross-linking" evidence="1">
    <location>
        <begin position="92"/>
        <end position="95"/>
    </location>
</feature>
<feature type="region of interest" description="Isodityrosine cross-linking" evidence="1">
    <location>
        <begin position="120"/>
        <end position="123"/>
    </location>
</feature>
<feature type="region of interest" description="Isodityrosine cross-linking" evidence="1">
    <location>
        <begin position="148"/>
        <end position="151"/>
    </location>
</feature>
<feature type="region of interest" description="Isodityrosine cross-linking" evidence="1">
    <location>
        <begin position="176"/>
        <end position="179"/>
    </location>
</feature>
<feature type="region of interest" description="Isodityrosine cross-linking" evidence="1">
    <location>
        <begin position="204"/>
        <end position="207"/>
    </location>
</feature>
<feature type="region of interest" description="Isodityrosine cross-linking" evidence="1">
    <location>
        <begin position="232"/>
        <end position="235"/>
    </location>
</feature>
<feature type="region of interest" description="Isodityrosine cross-linking" evidence="1">
    <location>
        <begin position="260"/>
        <end position="263"/>
    </location>
</feature>
<feature type="region of interest" description="Isodityrosine cross-linking" evidence="1">
    <location>
        <begin position="288"/>
        <end position="291"/>
    </location>
</feature>
<feature type="region of interest" description="Isodityrosine cross-linking" evidence="1">
    <location>
        <begin position="316"/>
        <end position="319"/>
    </location>
</feature>
<feature type="region of interest" description="Isodityrosine cross-linking" evidence="1">
    <location>
        <begin position="344"/>
        <end position="347"/>
    </location>
</feature>
<feature type="region of interest" description="Isodityrosine cross-linking" evidence="1">
    <location>
        <begin position="372"/>
        <end position="375"/>
    </location>
</feature>
<feature type="region of interest" description="Isodityrosine cross-linking" evidence="1">
    <location>
        <begin position="400"/>
        <end position="403"/>
    </location>
</feature>
<feature type="region of interest" description="Isodityrosine cross-linking" evidence="1">
    <location>
        <begin position="420"/>
        <end position="423"/>
    </location>
</feature>
<feature type="compositionally biased region" description="Pro residues" evidence="2">
    <location>
        <begin position="49"/>
        <end position="59"/>
    </location>
</feature>
<feature type="compositionally biased region" description="Pro residues" evidence="2">
    <location>
        <begin position="68"/>
        <end position="87"/>
    </location>
</feature>
<feature type="compositionally biased region" description="Pro residues" evidence="2">
    <location>
        <begin position="96"/>
        <end position="115"/>
    </location>
</feature>
<feature type="compositionally biased region" description="Pro residues" evidence="2">
    <location>
        <begin position="124"/>
        <end position="143"/>
    </location>
</feature>
<feature type="compositionally biased region" description="Pro residues" evidence="2">
    <location>
        <begin position="152"/>
        <end position="171"/>
    </location>
</feature>
<feature type="compositionally biased region" description="Pro residues" evidence="2">
    <location>
        <begin position="180"/>
        <end position="199"/>
    </location>
</feature>
<feature type="compositionally biased region" description="Pro residues" evidence="2">
    <location>
        <begin position="208"/>
        <end position="227"/>
    </location>
</feature>
<feature type="compositionally biased region" description="Pro residues" evidence="2">
    <location>
        <begin position="236"/>
        <end position="255"/>
    </location>
</feature>
<feature type="compositionally biased region" description="Pro residues" evidence="2">
    <location>
        <begin position="264"/>
        <end position="283"/>
    </location>
</feature>
<feature type="compositionally biased region" description="Pro residues" evidence="2">
    <location>
        <begin position="292"/>
        <end position="311"/>
    </location>
</feature>
<feature type="compositionally biased region" description="Pro residues" evidence="2">
    <location>
        <begin position="320"/>
        <end position="339"/>
    </location>
</feature>
<feature type="compositionally biased region" description="Pro residues" evidence="2">
    <location>
        <begin position="348"/>
        <end position="367"/>
    </location>
</feature>
<feature type="compositionally biased region" description="Pro residues" evidence="2">
    <location>
        <begin position="376"/>
        <end position="395"/>
    </location>
</feature>
<accession>Q9FS16</accession>
<accession>Q9FS14</accession>
<accession>Q9LMP2</accession>
<comment type="function">
    <text evidence="3 4 5 6">Structural component which strengthens the primary cell wall (PubMed:11475326). Forms dendritic structures indicating a propensity for self-assembly through tyrosine cross-linking (PubMed:18256186, PubMed:21415277). Forms intermolecular cross-links exclusively by pulcherosine (three Tyr) (PubMed:18256186). Scaffold formation requires an unobstructed C-terminus of EXT3 (PubMed:18256186). Required for the correct positioning of the cell plate during cytokinesis in cells of the developing embryo (PubMed:12034904). Extensins contain a characteristic repeat of the pentapeptide Ser-Pro(4). For this particular extensin, a typical repeat of Ser-Pro(3) is found (PubMed:11475326).</text>
</comment>
<comment type="subcellular location">
    <subcellularLocation>
        <location evidence="4">Secreted</location>
        <location evidence="4">Primary cell wall</location>
    </subcellularLocation>
</comment>
<comment type="tissue specificity">
    <text evidence="3">Predominantly expressed in the roots.</text>
</comment>
<comment type="developmental stage">
    <text evidence="3 4">Early expressed in the whole plant, but was restricted to lower stems, flower buds and roots in the mature plant (6 weeks old) (PubMed:11475326). Detected in cells throughout the embryo, including the suspensor, from the 32-cell stage, with expression increasing up to the torpedo stage, followed by a decrease at the bent-cotyledon stage, with little or no expression detectable in the nearly mature cotyledon stage of development (PubMed:12034904).</text>
</comment>
<comment type="induction">
    <text evidence="3">By wounding, water and cold stresses; in response to plant hormones 2,4-D, BAP, GA3, and ABA treatment; in response to L-Ser, Hyp and L-Pro treatment. Slightly repressed by salt stress.</text>
</comment>
<comment type="PTM">
    <text evidence="5 7 8 9">The proline residues of the Ser-Pro(3) repeats are hydroxylated and then O-glycosylated (arabinosylation) by HPAT1, HPAT2 and HPAT3 (PubMed:24036508). Around 20% of Hyp units are in the nonglycosylated form (PubMed:18256186). The Ser residues are O-galactosylated (PubMed:25944827, Ref.9). The lack of Ser-O-galactosylation does not affect Hyp-O-arabinosylation, but both types of O-glycosylation are central for the functionality of the protein (PubMed:25944827). Correct Hyp-O-arabinosylation appears to be responsible for generating a bend on the EXT3 backbone around a YVY motif, which may represent a better scenario for Tyr intramolecular cross-links (isodityrosine type) (PubMed:25944827).</text>
</comment>
<comment type="PTM">
    <text evidence="14">Synthetised as soluble proteins which become insolubilised in the cell wall through the intermolecular cross-linking of Tyr on adjacent monomers. Isodityrosine (IDT) stabilizes and makes rigid the part of the polypeptide where IDT functional sites are present.</text>
</comment>
<comment type="disruption phenotype">
    <text evidence="4 5">Embryo lethality. Germination-defective agravitropic seedlings with severely defective root, shoot, and hypocotyl and a vitreous appearance throughout (PubMed:12034904). Defective Cell Walls (PubMed:18256186).</text>
</comment>
<comment type="similarity">
    <text evidence="13">Belongs to the extensin family.</text>
</comment>
<comment type="sequence caution" evidence="13">
    <conflict type="miscellaneous discrepancy">
        <sequence resource="EMBL-CDS" id="BAB20084"/>
    </conflict>
    <text>Chimeric cDNA. Its C-terminal part is derived from the gene At2g20230.</text>
</comment>
<comment type="sequence caution" evidence="13">
    <conflict type="miscellaneous discrepancy">
        <sequence resource="EMBL-CDS" id="BAB20086"/>
    </conflict>
    <text>Truncated cDNA resulting of the removal of two cryptic introns in the genomic sequence.</text>
</comment>
<keyword id="KW-0134">Cell wall</keyword>
<keyword id="KW-0961">Cell wall biogenesis/degradation</keyword>
<keyword id="KW-0325">Glycoprotein</keyword>
<keyword id="KW-0379">Hydroxylation</keyword>
<keyword id="KW-1185">Reference proteome</keyword>
<keyword id="KW-0677">Repeat</keyword>
<keyword id="KW-0964">Secreted</keyword>
<keyword id="KW-0732">Signal</keyword>
<reference key="1">
    <citation type="journal article" date="2001" name="DNA Res.">
        <title>Characterization of four extensin genes in Arabidopsis thaliana by differential gene expression under stress and non-stress conditions.</title>
        <authorList>
            <person name="Yoshiba Y."/>
            <person name="Aoki C."/>
            <person name="Iuchi S."/>
            <person name="Nanjo T."/>
            <person name="Seki M."/>
            <person name="Sekiguchi F."/>
            <person name="Yamaguchi-Shinozaki K."/>
            <person name="Shinozaki K."/>
        </authorList>
    </citation>
    <scope>NUCLEOTIDE SEQUENCE [MRNA]</scope>
    <scope>FUNCTION</scope>
    <scope>TISSUE SPECIFICITY</scope>
    <scope>DEVELOPMENTAL STAGE</scope>
    <scope>INDUCTION</scope>
    <source>
        <strain>cv. Columbia</strain>
    </source>
</reference>
<reference key="2">
    <citation type="journal article" date="2000" name="Nature">
        <title>Sequence and analysis of chromosome 1 of the plant Arabidopsis thaliana.</title>
        <authorList>
            <person name="Theologis A."/>
            <person name="Ecker J.R."/>
            <person name="Palm C.J."/>
            <person name="Federspiel N.A."/>
            <person name="Kaul S."/>
            <person name="White O."/>
            <person name="Alonso J."/>
            <person name="Altafi H."/>
            <person name="Araujo R."/>
            <person name="Bowman C.L."/>
            <person name="Brooks S.Y."/>
            <person name="Buehler E."/>
            <person name="Chan A."/>
            <person name="Chao Q."/>
            <person name="Chen H."/>
            <person name="Cheuk R.F."/>
            <person name="Chin C.W."/>
            <person name="Chung M.K."/>
            <person name="Conn L."/>
            <person name="Conway A.B."/>
            <person name="Conway A.R."/>
            <person name="Creasy T.H."/>
            <person name="Dewar K."/>
            <person name="Dunn P."/>
            <person name="Etgu P."/>
            <person name="Feldblyum T.V."/>
            <person name="Feng J.-D."/>
            <person name="Fong B."/>
            <person name="Fujii C.Y."/>
            <person name="Gill J.E."/>
            <person name="Goldsmith A.D."/>
            <person name="Haas B."/>
            <person name="Hansen N.F."/>
            <person name="Hughes B."/>
            <person name="Huizar L."/>
            <person name="Hunter J.L."/>
            <person name="Jenkins J."/>
            <person name="Johnson-Hopson C."/>
            <person name="Khan S."/>
            <person name="Khaykin E."/>
            <person name="Kim C.J."/>
            <person name="Koo H.L."/>
            <person name="Kremenetskaia I."/>
            <person name="Kurtz D.B."/>
            <person name="Kwan A."/>
            <person name="Lam B."/>
            <person name="Langin-Hooper S."/>
            <person name="Lee A."/>
            <person name="Lee J.M."/>
            <person name="Lenz C.A."/>
            <person name="Li J.H."/>
            <person name="Li Y.-P."/>
            <person name="Lin X."/>
            <person name="Liu S.X."/>
            <person name="Liu Z.A."/>
            <person name="Luros J.S."/>
            <person name="Maiti R."/>
            <person name="Marziali A."/>
            <person name="Militscher J."/>
            <person name="Miranda M."/>
            <person name="Nguyen M."/>
            <person name="Nierman W.C."/>
            <person name="Osborne B.I."/>
            <person name="Pai G."/>
            <person name="Peterson J."/>
            <person name="Pham P.K."/>
            <person name="Rizzo M."/>
            <person name="Rooney T."/>
            <person name="Rowley D."/>
            <person name="Sakano H."/>
            <person name="Salzberg S.L."/>
            <person name="Schwartz J.R."/>
            <person name="Shinn P."/>
            <person name="Southwick A.M."/>
            <person name="Sun H."/>
            <person name="Tallon L.J."/>
            <person name="Tambunga G."/>
            <person name="Toriumi M.J."/>
            <person name="Town C.D."/>
            <person name="Utterback T."/>
            <person name="Van Aken S."/>
            <person name="Vaysberg M."/>
            <person name="Vysotskaia V.S."/>
            <person name="Walker M."/>
            <person name="Wu D."/>
            <person name="Yu G."/>
            <person name="Fraser C.M."/>
            <person name="Venter J.C."/>
            <person name="Davis R.W."/>
        </authorList>
    </citation>
    <scope>NUCLEOTIDE SEQUENCE [LARGE SCALE GENOMIC DNA]</scope>
    <source>
        <strain>cv. Columbia</strain>
    </source>
</reference>
<reference key="3">
    <citation type="journal article" date="2017" name="Plant J.">
        <title>Araport11: a complete reannotation of the Arabidopsis thaliana reference genome.</title>
        <authorList>
            <person name="Cheng C.Y."/>
            <person name="Krishnakumar V."/>
            <person name="Chan A.P."/>
            <person name="Thibaud-Nissen F."/>
            <person name="Schobel S."/>
            <person name="Town C.D."/>
        </authorList>
    </citation>
    <scope>GENOME REANNOTATION</scope>
    <source>
        <strain>cv. Columbia</strain>
    </source>
</reference>
<reference key="4">
    <citation type="journal article" date="2002" name="Plant Cell">
        <title>The cell wall hydroxyproline-rich glycoprotein RSH is essential for normal embryo development in Arabidopsis.</title>
        <authorList>
            <person name="Hall Q."/>
            <person name="Cannon M.C."/>
        </authorList>
    </citation>
    <scope>FUNCTION</scope>
    <scope>DISRUPTION PHENOTYPE</scope>
    <scope>DEVELOPMENTAL STAGE</scope>
    <scope>SUBCELLULAR LOCATION</scope>
</reference>
<reference key="5">
    <citation type="journal article" date="2008" name="Proc. Natl. Acad. Sci. U.S.A.">
        <title>Self-assembly of the plant cell wall requires an extensin scaffold.</title>
        <authorList>
            <person name="Cannon M.C."/>
            <person name="Terneus K."/>
            <person name="Hall Q."/>
            <person name="Tan L."/>
            <person name="Wang Y."/>
            <person name="Wegenhart B.L."/>
            <person name="Chen L."/>
            <person name="Lamport D.T."/>
            <person name="Chen Y."/>
            <person name="Kieliszewski M.J."/>
        </authorList>
    </citation>
    <scope>FUNCTION</scope>
    <scope>DISRUPTION PHENOTYPE</scope>
    <scope>GLYCOSYLATION</scope>
</reference>
<reference key="6">
    <citation type="journal article" date="2010" name="Plant Physiol.">
        <title>A bioinformatics approach to the identification, classification, and analysis of hydroxyproline-rich glycoproteins.</title>
        <authorList>
            <person name="Showalter A.M."/>
            <person name="Keppler B."/>
            <person name="Lichtenberg J."/>
            <person name="Gu D."/>
            <person name="Welch L.R."/>
        </authorList>
    </citation>
    <scope>GENE FAMILY</scope>
    <scope>NOMENCLATURE</scope>
</reference>
<reference key="7">
    <citation type="journal article" date="2011" name="Plant Physiol.">
        <title>Role of the extensin superfamily in primary cell wall architecture.</title>
        <authorList>
            <person name="Lamport D.T."/>
            <person name="Kieliszewski M.J."/>
            <person name="Chen Y."/>
            <person name="Cannon M.C."/>
        </authorList>
    </citation>
    <scope>FUNCTION</scope>
</reference>
<reference key="8">
    <citation type="journal article" date="2013" name="Nat. Chem. Biol.">
        <title>Identification of three hydroxyproline O-arabinosyltransferases in Arabidopsis thaliana.</title>
        <authorList>
            <person name="Ogawa-Ohnishi M."/>
            <person name="Matsushita W."/>
            <person name="Matsubayashi Y."/>
        </authorList>
    </citation>
    <scope>GLYCOSYLATION AT HYDROXYPROLINE</scope>
</reference>
<reference key="9">
    <citation type="journal article" date="2014" name="J. Biol. Chem.">
        <title>Identification of a novel peptidyl serine alpha-galactosyltransferase gene family in plants.</title>
        <authorList>
            <person name="Saito F."/>
            <person name="Suyama A."/>
            <person name="Oka T."/>
            <person name="Yoko-o T."/>
            <person name="Matsuoka K."/>
            <person name="Jigami Y."/>
            <person name="Shimma Y."/>
        </authorList>
    </citation>
    <scope>GLYCOSYLATION AT SERINE</scope>
</reference>
<reference key="10">
    <citation type="journal article" date="2015" name="Plant Physiol.">
        <title>Low sugar is not always good: impact of specific o-glycan defects on tip growth in Arabidopsis.</title>
        <authorList>
            <person name="Velasquez S.M."/>
            <person name="Marzol E."/>
            <person name="Borassi C."/>
            <person name="Pol-Fachin L."/>
            <person name="Ricardi M.M."/>
            <person name="Mangano S."/>
            <person name="Juarez S.P."/>
            <person name="Salter J.D."/>
            <person name="Dorosz J.G."/>
            <person name="Marcus S.E."/>
            <person name="Knox J.P."/>
            <person name="Dinneny J.R."/>
            <person name="Iusem N.D."/>
            <person name="Verli H."/>
            <person name="Estevez J.M."/>
        </authorList>
    </citation>
    <scope>FUNCTION</scope>
    <scope>GLYCOSYLATION</scope>
</reference>
<dbReference type="EMBL" id="AB031819">
    <property type="protein sequence ID" value="BAB20084.1"/>
    <property type="status" value="ALT_SEQ"/>
    <property type="molecule type" value="mRNA"/>
</dbReference>
<dbReference type="EMBL" id="AB031821">
    <property type="protein sequence ID" value="BAB20086.1"/>
    <property type="status" value="ALT_SEQ"/>
    <property type="molecule type" value="mRNA"/>
</dbReference>
<dbReference type="EMBL" id="AC036104">
    <property type="protein sequence ID" value="AAF81360.1"/>
    <property type="molecule type" value="Genomic_DNA"/>
</dbReference>
<dbReference type="EMBL" id="CP002684">
    <property type="protein sequence ID" value="AEE30083.1"/>
    <property type="molecule type" value="Genomic_DNA"/>
</dbReference>
<dbReference type="PIR" id="B86346">
    <property type="entry name" value="B86346"/>
</dbReference>
<dbReference type="RefSeq" id="NP_173553.1">
    <property type="nucleotide sequence ID" value="NM_101983.4"/>
</dbReference>
<dbReference type="STRING" id="3702.Q9FS16"/>
<dbReference type="PaxDb" id="3702-AT1G21310.1"/>
<dbReference type="ProteomicsDB" id="221822"/>
<dbReference type="EnsemblPlants" id="AT1G21310.1">
    <property type="protein sequence ID" value="AT1G21310.1"/>
    <property type="gene ID" value="AT1G21310"/>
</dbReference>
<dbReference type="GeneID" id="838728"/>
<dbReference type="Gramene" id="AT1G21310.1">
    <property type="protein sequence ID" value="AT1G21310.1"/>
    <property type="gene ID" value="AT1G21310"/>
</dbReference>
<dbReference type="KEGG" id="ath:AT1G21310"/>
<dbReference type="Araport" id="AT1G21310"/>
<dbReference type="TAIR" id="AT1G21310">
    <property type="gene designation" value="EXT3"/>
</dbReference>
<dbReference type="eggNOG" id="ENOG502SA1Q">
    <property type="taxonomic scope" value="Eukaryota"/>
</dbReference>
<dbReference type="HOGENOM" id="CLU_035661_0_0_1"/>
<dbReference type="InParanoid" id="Q9FS16"/>
<dbReference type="OMA" id="PKKVYYP"/>
<dbReference type="OrthoDB" id="1114227at2759"/>
<dbReference type="PRO" id="PR:Q9FS16"/>
<dbReference type="Proteomes" id="UP000006548">
    <property type="component" value="Chromosome 1"/>
</dbReference>
<dbReference type="ExpressionAtlas" id="Q9FS16">
    <property type="expression patterns" value="baseline and differential"/>
</dbReference>
<dbReference type="GO" id="GO:0005576">
    <property type="term" value="C:extracellular region"/>
    <property type="evidence" value="ECO:0007669"/>
    <property type="project" value="UniProtKB-KW"/>
</dbReference>
<dbReference type="GO" id="GO:0009530">
    <property type="term" value="C:primary cell wall"/>
    <property type="evidence" value="ECO:0007669"/>
    <property type="project" value="UniProtKB-SubCell"/>
</dbReference>
<dbReference type="GO" id="GO:0005199">
    <property type="term" value="F:structural constituent of cell wall"/>
    <property type="evidence" value="ECO:0000314"/>
    <property type="project" value="TAIR"/>
</dbReference>
<dbReference type="GO" id="GO:0009664">
    <property type="term" value="P:plant-type cell wall organization"/>
    <property type="evidence" value="ECO:0007669"/>
    <property type="project" value="InterPro"/>
</dbReference>
<dbReference type="InterPro" id="IPR006706">
    <property type="entry name" value="Extensin_dom"/>
</dbReference>
<dbReference type="PANTHER" id="PTHR36586:SF38">
    <property type="entry name" value="EXTENSIN-1-RELATED"/>
    <property type="match status" value="1"/>
</dbReference>
<dbReference type="PANTHER" id="PTHR36586">
    <property type="entry name" value="PROLINE-RICH EXTENSIN-LIKE"/>
    <property type="match status" value="1"/>
</dbReference>
<dbReference type="Pfam" id="PF04554">
    <property type="entry name" value="Extensin_2"/>
    <property type="match status" value="11"/>
</dbReference>
<gene>
    <name evidence="10" type="primary">EXT3</name>
    <name evidence="12" type="synonym">EXT3/5</name>
    <name evidence="10" type="synonym">EXT5</name>
    <name evidence="11" type="synonym">RSH</name>
    <name evidence="15" type="ordered locus">At1g21310</name>
    <name evidence="16" type="ORF">F16F4.4</name>
</gene>
<sequence>MGSPMASLVATLLVLTISLTFVSQSTANYFYSSPPPPVKHYTPPVKHYSPPPVYHSPPPPKKHYEYKSPPPPVKHYSPPPVYHSPPPPKKHYVYKSPPPPVKHYSPPPVYHSPPPPKKHYVYKSPPPPVKHYSPPPVYHSPPPPKKHYVYKSPPPPVKHYSPPPVYHSPPPPKKHYVYKSPPPPVKHYSPPPVYHSPPPPKKHYVYKSPPPPVKHYSPPPVYHSPPPPKKHYVYKSPPPPVKHYSPPPVYHSPPPPKKHYVYKSPPPPVKHYSPPPVYHSPPPPKKHYVYKSPPPPVKHYSPPPVYHSPPPPKKHYVYKSPPPPVKHYSPPPVYHSPPPPKKHYVYKSPPPPVKHYSPPPVYHSPPPPKKHYVYKSPPPPVKHYSPPPVYHSPPPPKEKYVYKSPPPPPVHHYSPPHHPYLYKSPPPPYHY</sequence>
<protein>
    <recommendedName>
        <fullName evidence="10">Extensin-3</fullName>
        <shortName evidence="10">AtExt3</shortName>
        <shortName evidence="10">AtExt5</shortName>
    </recommendedName>
    <alternativeName>
        <fullName evidence="12">Extensin-3/5</fullName>
    </alternativeName>
    <alternativeName>
        <fullName evidence="11">Protein ROOT-SHOOT-HYPOCOTYL-DEFECTIVE</fullName>
    </alternativeName>
</protein>
<proteinExistence type="evidence at protein level"/>
<evidence type="ECO:0000255" key="1"/>
<evidence type="ECO:0000256" key="2">
    <source>
        <dbReference type="SAM" id="MobiDB-lite"/>
    </source>
</evidence>
<evidence type="ECO:0000269" key="3">
    <source>
    </source>
</evidence>
<evidence type="ECO:0000269" key="4">
    <source>
    </source>
</evidence>
<evidence type="ECO:0000269" key="5">
    <source>
    </source>
</evidence>
<evidence type="ECO:0000269" key="6">
    <source>
    </source>
</evidence>
<evidence type="ECO:0000269" key="7">
    <source>
    </source>
</evidence>
<evidence type="ECO:0000269" key="8">
    <source>
    </source>
</evidence>
<evidence type="ECO:0000269" key="9">
    <source ref="9"/>
</evidence>
<evidence type="ECO:0000303" key="10">
    <source>
    </source>
</evidence>
<evidence type="ECO:0000303" key="11">
    <source>
    </source>
</evidence>
<evidence type="ECO:0000303" key="12">
    <source>
    </source>
</evidence>
<evidence type="ECO:0000305" key="13"/>
<evidence type="ECO:0000305" key="14">
    <source>
    </source>
</evidence>
<evidence type="ECO:0000312" key="15">
    <source>
        <dbReference type="Araport" id="AT1G21310"/>
    </source>
</evidence>
<evidence type="ECO:0000312" key="16">
    <source>
        <dbReference type="EMBL" id="AAF81360.1"/>
    </source>
</evidence>
<organism>
    <name type="scientific">Arabidopsis thaliana</name>
    <name type="common">Mouse-ear cress</name>
    <dbReference type="NCBI Taxonomy" id="3702"/>
    <lineage>
        <taxon>Eukaryota</taxon>
        <taxon>Viridiplantae</taxon>
        <taxon>Streptophyta</taxon>
        <taxon>Embryophyta</taxon>
        <taxon>Tracheophyta</taxon>
        <taxon>Spermatophyta</taxon>
        <taxon>Magnoliopsida</taxon>
        <taxon>eudicotyledons</taxon>
        <taxon>Gunneridae</taxon>
        <taxon>Pentapetalae</taxon>
        <taxon>rosids</taxon>
        <taxon>malvids</taxon>
        <taxon>Brassicales</taxon>
        <taxon>Brassicaceae</taxon>
        <taxon>Camelineae</taxon>
        <taxon>Arabidopsis</taxon>
    </lineage>
</organism>
<name>EXTN3_ARATH</name>